<comment type="function">
    <text evidence="1">Located on the platform of the 30S subunit, it bridges several disparate RNA helices of the 16S rRNA. Forms part of the Shine-Dalgarno cleft in the 70S ribosome.</text>
</comment>
<comment type="subunit">
    <text evidence="1">Part of the 30S ribosomal subunit. Interacts with proteins S7 and S18. Binds to IF-3.</text>
</comment>
<comment type="similarity">
    <text evidence="1">Belongs to the universal ribosomal protein uS11 family.</text>
</comment>
<dbReference type="EMBL" id="AB032408">
    <property type="protein sequence ID" value="BAA84523.1"/>
    <property type="molecule type" value="Genomic_DNA"/>
</dbReference>
<dbReference type="EMBL" id="AP011177">
    <property type="protein sequence ID" value="BAJ04110.1"/>
    <property type="molecule type" value="Genomic_DNA"/>
</dbReference>
<dbReference type="RefSeq" id="WP_012327241.1">
    <property type="nucleotide sequence ID" value="NC_014012.1"/>
</dbReference>
<dbReference type="SMR" id="Q9S0R0"/>
<dbReference type="STRING" id="637905.SVI_4139"/>
<dbReference type="KEGG" id="svo:SVI_4139"/>
<dbReference type="eggNOG" id="COG0100">
    <property type="taxonomic scope" value="Bacteria"/>
</dbReference>
<dbReference type="HOGENOM" id="CLU_072439_5_0_6"/>
<dbReference type="OrthoDB" id="9806415at2"/>
<dbReference type="Proteomes" id="UP000002350">
    <property type="component" value="Chromosome"/>
</dbReference>
<dbReference type="GO" id="GO:1990904">
    <property type="term" value="C:ribonucleoprotein complex"/>
    <property type="evidence" value="ECO:0007669"/>
    <property type="project" value="UniProtKB-KW"/>
</dbReference>
<dbReference type="GO" id="GO:0005840">
    <property type="term" value="C:ribosome"/>
    <property type="evidence" value="ECO:0007669"/>
    <property type="project" value="UniProtKB-KW"/>
</dbReference>
<dbReference type="GO" id="GO:0019843">
    <property type="term" value="F:rRNA binding"/>
    <property type="evidence" value="ECO:0007669"/>
    <property type="project" value="UniProtKB-UniRule"/>
</dbReference>
<dbReference type="GO" id="GO:0003735">
    <property type="term" value="F:structural constituent of ribosome"/>
    <property type="evidence" value="ECO:0007669"/>
    <property type="project" value="InterPro"/>
</dbReference>
<dbReference type="GO" id="GO:0006412">
    <property type="term" value="P:translation"/>
    <property type="evidence" value="ECO:0007669"/>
    <property type="project" value="UniProtKB-UniRule"/>
</dbReference>
<dbReference type="FunFam" id="3.30.420.80:FF:000001">
    <property type="entry name" value="30S ribosomal protein S11"/>
    <property type="match status" value="1"/>
</dbReference>
<dbReference type="Gene3D" id="3.30.420.80">
    <property type="entry name" value="Ribosomal protein S11"/>
    <property type="match status" value="1"/>
</dbReference>
<dbReference type="HAMAP" id="MF_01310">
    <property type="entry name" value="Ribosomal_uS11"/>
    <property type="match status" value="1"/>
</dbReference>
<dbReference type="InterPro" id="IPR001971">
    <property type="entry name" value="Ribosomal_uS11"/>
</dbReference>
<dbReference type="InterPro" id="IPR019981">
    <property type="entry name" value="Ribosomal_uS11_bac-type"/>
</dbReference>
<dbReference type="InterPro" id="IPR018102">
    <property type="entry name" value="Ribosomal_uS11_CS"/>
</dbReference>
<dbReference type="InterPro" id="IPR036967">
    <property type="entry name" value="Ribosomal_uS11_sf"/>
</dbReference>
<dbReference type="NCBIfam" id="NF003698">
    <property type="entry name" value="PRK05309.1"/>
    <property type="match status" value="1"/>
</dbReference>
<dbReference type="NCBIfam" id="TIGR03632">
    <property type="entry name" value="uS11_bact"/>
    <property type="match status" value="1"/>
</dbReference>
<dbReference type="PANTHER" id="PTHR11759">
    <property type="entry name" value="40S RIBOSOMAL PROTEIN S14/30S RIBOSOMAL PROTEIN S11"/>
    <property type="match status" value="1"/>
</dbReference>
<dbReference type="Pfam" id="PF00411">
    <property type="entry name" value="Ribosomal_S11"/>
    <property type="match status" value="1"/>
</dbReference>
<dbReference type="PIRSF" id="PIRSF002131">
    <property type="entry name" value="Ribosomal_S11"/>
    <property type="match status" value="1"/>
</dbReference>
<dbReference type="SUPFAM" id="SSF53137">
    <property type="entry name" value="Translational machinery components"/>
    <property type="match status" value="1"/>
</dbReference>
<dbReference type="PROSITE" id="PS00054">
    <property type="entry name" value="RIBOSOMAL_S11"/>
    <property type="match status" value="1"/>
</dbReference>
<reference key="1">
    <citation type="journal article" date="2000" name="FEMS Microbiol. Lett.">
        <title>Isolation and piezoresponse of the rpoA gene encoding the RNA polymerase alpha subunit from the deep-sea piezophilic bacterium Shewanella violacea.</title>
        <authorList>
            <person name="Nakasone K."/>
            <person name="Ikegami A."/>
            <person name="Fujii S."/>
            <person name="Kato C."/>
            <person name="Horikoshi K."/>
        </authorList>
    </citation>
    <scope>NUCLEOTIDE SEQUENCE [GENOMIC DNA]</scope>
</reference>
<reference key="2">
    <citation type="journal article" date="2010" name="Mol. Biosyst.">
        <title>Complete genome sequence and comparative analysis of Shewanella violacea, a psychrophilic and piezophilic bacterium from deep sea floor sediments.</title>
        <authorList>
            <person name="Aono E."/>
            <person name="Baba T."/>
            <person name="Ara T."/>
            <person name="Nishi T."/>
            <person name="Nakamichi T."/>
            <person name="Inamoto E."/>
            <person name="Toyonaga H."/>
            <person name="Hasegawa M."/>
            <person name="Takai Y."/>
            <person name="Okumura Y."/>
            <person name="Baba M."/>
            <person name="Tomita M."/>
            <person name="Kato C."/>
            <person name="Oshima T."/>
            <person name="Nakasone K."/>
            <person name="Mori H."/>
        </authorList>
    </citation>
    <scope>NUCLEOTIDE SEQUENCE [LARGE SCALE GENOMIC DNA]</scope>
    <source>
        <strain>JCM 10179 / CIP 106290 / LMG 19151 / DSS12</strain>
    </source>
</reference>
<accession>Q9S0R0</accession>
<accession>D4ZE49</accession>
<protein>
    <recommendedName>
        <fullName evidence="1">Small ribosomal subunit protein uS11</fullName>
    </recommendedName>
    <alternativeName>
        <fullName evidence="2">30S ribosomal protein S11</fullName>
    </alternativeName>
</protein>
<proteinExistence type="inferred from homology"/>
<feature type="chain" id="PRO_0000123215" description="Small ribosomal subunit protein uS11">
    <location>
        <begin position="1"/>
        <end position="130"/>
    </location>
</feature>
<feature type="sequence conflict" description="In Ref. 1; BAA84523." evidence="2" ref="1">
    <original>KRRV</original>
    <variation>ETSRLIRRF</variation>
    <location>
        <begin position="127"/>
        <end position="130"/>
    </location>
</feature>
<gene>
    <name evidence="1" type="primary">rpsK</name>
    <name type="ordered locus">SVI_4139</name>
</gene>
<sequence length="130" mass="13924">MAKSPSRSPRKRVRKQVADGMAHIHASFNNTIITITDRQGNALSWATSGGSGFRGSRKSTPFAAQVAAERAGVAAQDYGVKNLEVFVKGPGPGRESAIRALNSVGYKITNITDVTPIPHNGCRPPKKRRV</sequence>
<organism>
    <name type="scientific">Shewanella violacea (strain JCM 10179 / CIP 106290 / LMG 19151 / DSS12)</name>
    <dbReference type="NCBI Taxonomy" id="637905"/>
    <lineage>
        <taxon>Bacteria</taxon>
        <taxon>Pseudomonadati</taxon>
        <taxon>Pseudomonadota</taxon>
        <taxon>Gammaproteobacteria</taxon>
        <taxon>Alteromonadales</taxon>
        <taxon>Shewanellaceae</taxon>
        <taxon>Shewanella</taxon>
    </lineage>
</organism>
<keyword id="KW-1185">Reference proteome</keyword>
<keyword id="KW-0687">Ribonucleoprotein</keyword>
<keyword id="KW-0689">Ribosomal protein</keyword>
<keyword id="KW-0694">RNA-binding</keyword>
<keyword id="KW-0699">rRNA-binding</keyword>
<evidence type="ECO:0000255" key="1">
    <source>
        <dbReference type="HAMAP-Rule" id="MF_01310"/>
    </source>
</evidence>
<evidence type="ECO:0000305" key="2"/>
<name>RS11_SHEVD</name>